<evidence type="ECO:0000305" key="1"/>
<dbReference type="EC" id="2.-.-.-"/>
<dbReference type="EMBL" id="X77921">
    <property type="protein sequence ID" value="CAA54888.2"/>
    <property type="molecule type" value="Genomic_DNA"/>
</dbReference>
<dbReference type="PIR" id="S61900">
    <property type="entry name" value="S52147"/>
</dbReference>
<dbReference type="SMR" id="Q46637"/>
<dbReference type="OMA" id="IMQQLGM"/>
<dbReference type="UniPathway" id="UPA00631"/>
<dbReference type="GO" id="GO:0016740">
    <property type="term" value="F:transferase activity"/>
    <property type="evidence" value="ECO:0007669"/>
    <property type="project" value="UniProtKB-KW"/>
</dbReference>
<dbReference type="GO" id="GO:0000271">
    <property type="term" value="P:polysaccharide biosynthetic process"/>
    <property type="evidence" value="ECO:0007669"/>
    <property type="project" value="UniProtKB-KW"/>
</dbReference>
<dbReference type="InterPro" id="IPR007345">
    <property type="entry name" value="Polysacch_pyruvyl_Trfase"/>
</dbReference>
<dbReference type="NCBIfam" id="NF007452">
    <property type="entry name" value="PRK10017.1"/>
    <property type="match status" value="1"/>
</dbReference>
<dbReference type="PANTHER" id="PTHR36836">
    <property type="entry name" value="COLANIC ACID BIOSYNTHESIS PROTEIN WCAK"/>
    <property type="match status" value="1"/>
</dbReference>
<dbReference type="PANTHER" id="PTHR36836:SF1">
    <property type="entry name" value="COLANIC ACID BIOSYNTHESIS PROTEIN WCAK"/>
    <property type="match status" value="1"/>
</dbReference>
<dbReference type="Pfam" id="PF04230">
    <property type="entry name" value="PS_pyruv_trans"/>
    <property type="match status" value="1"/>
</dbReference>
<organism>
    <name type="scientific">Erwinia amylovora</name>
    <name type="common">Fire blight bacteria</name>
    <dbReference type="NCBI Taxonomy" id="552"/>
    <lineage>
        <taxon>Bacteria</taxon>
        <taxon>Pseudomonadati</taxon>
        <taxon>Pseudomonadota</taxon>
        <taxon>Gammaproteobacteria</taxon>
        <taxon>Enterobacterales</taxon>
        <taxon>Erwiniaceae</taxon>
        <taxon>Erwinia</taxon>
    </lineage>
</organism>
<sequence length="415" mass="46292">MKILLVGNHTCGNRGDGAILRGIIDSLHLERTDLDIDIISRFPTSSSYLLQQNILPDELFLETKKSNSLVAKVKRRLMPKIMMAHIRGSGFFKNLAVPEYLQQFTDKLKQYDAVIQVGGSFFVDLYGPLQFEHSLCALLAKKPVYMIGHSVGPFQKERFNQIANFVFSRVNSLVLRESVSLEMMEKAGITTQKVIPGADTAFLVRTRTLDAPGHNLIHWQNQIAASKTIAITVRELAPFDKRLGVTQQEYEMAFGKVINAMIERGYQVVALSTCTGIDSYHRDDRMVAITLGDYVQQKDKYRVVMDEFNDLELGILLAGCHLTIGTRLHSAIISMNFGTPAVAINYEHKSLGVMKQLGLPEMASDVQSLMDGSIIAKVNGVLDNYEEIEQQVARAVEQERILGNKITADVLKSIG</sequence>
<proteinExistence type="inferred from homology"/>
<gene>
    <name type="primary">amsJ</name>
</gene>
<comment type="function">
    <text>Involved in the biosynthesis of amylovoran which functions as a virulence factor.</text>
</comment>
<comment type="pathway">
    <text>Glycan metabolism; exopolysaccharide biosynthesis.</text>
</comment>
<comment type="similarity">
    <text evidence="1">Belongs to the polysaccharide pyruvyl transferase family.</text>
</comment>
<name>AMSJ_ERWAM</name>
<keyword id="KW-0270">Exopolysaccharide synthesis</keyword>
<keyword id="KW-0808">Transferase</keyword>
<keyword id="KW-0843">Virulence</keyword>
<protein>
    <recommendedName>
        <fullName>Amylovoran biosynthesis protein AmsJ</fullName>
        <ecNumber>2.-.-.-</ecNumber>
    </recommendedName>
</protein>
<reference key="1">
    <citation type="journal article" date="1995" name="Mol. Microbiol.">
        <title>Molecular analysis of the ams operon required for exopolysaccharide synthesis of Erwinia amylovora.</title>
        <authorList>
            <person name="Bugert P."/>
            <person name="Geider K."/>
        </authorList>
    </citation>
    <scope>NUCLEOTIDE SEQUENCE [GENOMIC DNA]</scope>
</reference>
<reference key="2">
    <citation type="submission" date="2011-08" db="EMBL/GenBank/DDBJ databases">
        <authorList>
            <person name="Geider K.K."/>
        </authorList>
    </citation>
    <scope>SEQUENCE REVISION TO 55; 379 AND 388</scope>
</reference>
<feature type="chain" id="PRO_0000073214" description="Amylovoran biosynthesis protein AmsJ">
    <location>
        <begin position="1"/>
        <end position="415"/>
    </location>
</feature>
<accession>Q46637</accession>